<protein>
    <recommendedName>
        <fullName evidence="1">UDP-3-O-acylglucosamine N-acyltransferase</fullName>
        <ecNumber evidence="1">2.3.1.191</ecNumber>
    </recommendedName>
</protein>
<evidence type="ECO:0000255" key="1">
    <source>
        <dbReference type="HAMAP-Rule" id="MF_00523"/>
    </source>
</evidence>
<name>LPXD_AZOSB</name>
<reference key="1">
    <citation type="journal article" date="2006" name="Nat. Biotechnol.">
        <title>Complete genome of the mutualistic, N2-fixing grass endophyte Azoarcus sp. strain BH72.</title>
        <authorList>
            <person name="Krause A."/>
            <person name="Ramakumar A."/>
            <person name="Bartels D."/>
            <person name="Battistoni F."/>
            <person name="Bekel T."/>
            <person name="Boch J."/>
            <person name="Boehm M."/>
            <person name="Friedrich F."/>
            <person name="Hurek T."/>
            <person name="Krause L."/>
            <person name="Linke B."/>
            <person name="McHardy A.C."/>
            <person name="Sarkar A."/>
            <person name="Schneiker S."/>
            <person name="Syed A.A."/>
            <person name="Thauer R."/>
            <person name="Vorhoelter F.-J."/>
            <person name="Weidner S."/>
            <person name="Puehler A."/>
            <person name="Reinhold-Hurek B."/>
            <person name="Kaiser O."/>
            <person name="Goesmann A."/>
        </authorList>
    </citation>
    <scope>NUCLEOTIDE SEQUENCE [LARGE SCALE GENOMIC DNA]</scope>
    <source>
        <strain>BH72</strain>
    </source>
</reference>
<proteinExistence type="inferred from homology"/>
<organism>
    <name type="scientific">Azoarcus sp. (strain BH72)</name>
    <dbReference type="NCBI Taxonomy" id="418699"/>
    <lineage>
        <taxon>Bacteria</taxon>
        <taxon>Pseudomonadati</taxon>
        <taxon>Pseudomonadota</taxon>
        <taxon>Betaproteobacteria</taxon>
        <taxon>Rhodocyclales</taxon>
        <taxon>Zoogloeaceae</taxon>
        <taxon>Azoarcus</taxon>
    </lineage>
</organism>
<gene>
    <name evidence="1" type="primary">lpxD</name>
    <name type="ordered locus">azo1899</name>
</gene>
<comment type="function">
    <text evidence="1">Catalyzes the N-acylation of UDP-3-O-acylglucosamine using 3-hydroxyacyl-ACP as the acyl donor. Is involved in the biosynthesis of lipid A, a phosphorylated glycolipid that anchors the lipopolysaccharide to the outer membrane of the cell.</text>
</comment>
<comment type="catalytic activity">
    <reaction evidence="1">
        <text>a UDP-3-O-[(3R)-3-hydroxyacyl]-alpha-D-glucosamine + a (3R)-hydroxyacyl-[ACP] = a UDP-2-N,3-O-bis[(3R)-3-hydroxyacyl]-alpha-D-glucosamine + holo-[ACP] + H(+)</text>
        <dbReference type="Rhea" id="RHEA:53836"/>
        <dbReference type="Rhea" id="RHEA-COMP:9685"/>
        <dbReference type="Rhea" id="RHEA-COMP:9945"/>
        <dbReference type="ChEBI" id="CHEBI:15378"/>
        <dbReference type="ChEBI" id="CHEBI:64479"/>
        <dbReference type="ChEBI" id="CHEBI:78827"/>
        <dbReference type="ChEBI" id="CHEBI:137740"/>
        <dbReference type="ChEBI" id="CHEBI:137748"/>
        <dbReference type="EC" id="2.3.1.191"/>
    </reaction>
</comment>
<comment type="pathway">
    <text evidence="1">Bacterial outer membrane biogenesis; LPS lipid A biosynthesis.</text>
</comment>
<comment type="subunit">
    <text evidence="1">Homotrimer.</text>
</comment>
<comment type="similarity">
    <text evidence="1">Belongs to the transferase hexapeptide repeat family. LpxD subfamily.</text>
</comment>
<sequence>MFRLDELAARLGGDVVGDPATTVRRVATLEQAGEGDLSFLANPKYVGRLKSSHASAIIVADSARSLLGEKAGIVTRDPYLYFARVAQLFNPPEAVAPGVHPLADVAVAVPASVAVAAGASIGAGVELGEDVVIGAGSSIGAGVRIGAGTRLAPRVVIYPGCVIGTNCLIHAGAVIGSDGFGFAREKSGAWVKIPQVGRVVIGDDVEIGANTTIDRGALDDTVIGNGVKIDNQIQIGHNVRIGDYTAIAGCVGIAGSTQIGARCMIGGQAGIIGHLTIADDVVISAGTLVTKSIHKPGVYTANLPVQPHADWVKNFAHLRHLDSLAARIRALEQSPDHPESA</sequence>
<accession>A1K6R1</accession>
<keyword id="KW-0012">Acyltransferase</keyword>
<keyword id="KW-0441">Lipid A biosynthesis</keyword>
<keyword id="KW-0444">Lipid biosynthesis</keyword>
<keyword id="KW-0443">Lipid metabolism</keyword>
<keyword id="KW-1185">Reference proteome</keyword>
<keyword id="KW-0677">Repeat</keyword>
<keyword id="KW-0808">Transferase</keyword>
<feature type="chain" id="PRO_1000050924" description="UDP-3-O-acylglucosamine N-acyltransferase">
    <location>
        <begin position="1"/>
        <end position="341"/>
    </location>
</feature>
<feature type="active site" description="Proton acceptor" evidence="1">
    <location>
        <position position="237"/>
    </location>
</feature>
<dbReference type="EC" id="2.3.1.191" evidence="1"/>
<dbReference type="EMBL" id="AM406670">
    <property type="protein sequence ID" value="CAL94516.1"/>
    <property type="molecule type" value="Genomic_DNA"/>
</dbReference>
<dbReference type="RefSeq" id="WP_011765632.1">
    <property type="nucleotide sequence ID" value="NC_008702.1"/>
</dbReference>
<dbReference type="SMR" id="A1K6R1"/>
<dbReference type="STRING" id="62928.azo1899"/>
<dbReference type="KEGG" id="azo:azo1899"/>
<dbReference type="eggNOG" id="COG1044">
    <property type="taxonomic scope" value="Bacteria"/>
</dbReference>
<dbReference type="HOGENOM" id="CLU_049865_0_1_4"/>
<dbReference type="UniPathway" id="UPA00973"/>
<dbReference type="Proteomes" id="UP000002588">
    <property type="component" value="Chromosome"/>
</dbReference>
<dbReference type="GO" id="GO:0016020">
    <property type="term" value="C:membrane"/>
    <property type="evidence" value="ECO:0007669"/>
    <property type="project" value="GOC"/>
</dbReference>
<dbReference type="GO" id="GO:0016410">
    <property type="term" value="F:N-acyltransferase activity"/>
    <property type="evidence" value="ECO:0007669"/>
    <property type="project" value="InterPro"/>
</dbReference>
<dbReference type="GO" id="GO:0009245">
    <property type="term" value="P:lipid A biosynthetic process"/>
    <property type="evidence" value="ECO:0007669"/>
    <property type="project" value="UniProtKB-UniRule"/>
</dbReference>
<dbReference type="CDD" id="cd03352">
    <property type="entry name" value="LbH_LpxD"/>
    <property type="match status" value="1"/>
</dbReference>
<dbReference type="Gene3D" id="1.20.5.170">
    <property type="match status" value="1"/>
</dbReference>
<dbReference type="Gene3D" id="2.160.10.10">
    <property type="entry name" value="Hexapeptide repeat proteins"/>
    <property type="match status" value="1"/>
</dbReference>
<dbReference type="Gene3D" id="3.40.1390.10">
    <property type="entry name" value="MurE/MurF, N-terminal domain"/>
    <property type="match status" value="1"/>
</dbReference>
<dbReference type="HAMAP" id="MF_00523">
    <property type="entry name" value="LpxD"/>
    <property type="match status" value="1"/>
</dbReference>
<dbReference type="InterPro" id="IPR001451">
    <property type="entry name" value="Hexapep"/>
</dbReference>
<dbReference type="InterPro" id="IPR018357">
    <property type="entry name" value="Hexapep_transf_CS"/>
</dbReference>
<dbReference type="InterPro" id="IPR007691">
    <property type="entry name" value="LpxD"/>
</dbReference>
<dbReference type="InterPro" id="IPR011004">
    <property type="entry name" value="Trimer_LpxA-like_sf"/>
</dbReference>
<dbReference type="InterPro" id="IPR020573">
    <property type="entry name" value="UDP_GlcNAc_AcTrfase_non-rep"/>
</dbReference>
<dbReference type="NCBIfam" id="TIGR01853">
    <property type="entry name" value="lipid_A_lpxD"/>
    <property type="match status" value="1"/>
</dbReference>
<dbReference type="NCBIfam" id="NF002060">
    <property type="entry name" value="PRK00892.1"/>
    <property type="match status" value="1"/>
</dbReference>
<dbReference type="PANTHER" id="PTHR43378">
    <property type="entry name" value="UDP-3-O-ACYLGLUCOSAMINE N-ACYLTRANSFERASE"/>
    <property type="match status" value="1"/>
</dbReference>
<dbReference type="PANTHER" id="PTHR43378:SF2">
    <property type="entry name" value="UDP-3-O-ACYLGLUCOSAMINE N-ACYLTRANSFERASE 1, MITOCHONDRIAL-RELATED"/>
    <property type="match status" value="1"/>
</dbReference>
<dbReference type="Pfam" id="PF00132">
    <property type="entry name" value="Hexapep"/>
    <property type="match status" value="2"/>
</dbReference>
<dbReference type="Pfam" id="PF14602">
    <property type="entry name" value="Hexapep_2"/>
    <property type="match status" value="2"/>
</dbReference>
<dbReference type="Pfam" id="PF04613">
    <property type="entry name" value="LpxD"/>
    <property type="match status" value="1"/>
</dbReference>
<dbReference type="SUPFAM" id="SSF51161">
    <property type="entry name" value="Trimeric LpxA-like enzymes"/>
    <property type="match status" value="1"/>
</dbReference>
<dbReference type="PROSITE" id="PS00101">
    <property type="entry name" value="HEXAPEP_TRANSFERASES"/>
    <property type="match status" value="2"/>
</dbReference>